<keyword id="KW-0066">ATP synthesis</keyword>
<keyword id="KW-0067">ATP-binding</keyword>
<keyword id="KW-0997">Cell inner membrane</keyword>
<keyword id="KW-1003">Cell membrane</keyword>
<keyword id="KW-0139">CF(1)</keyword>
<keyword id="KW-0375">Hydrogen ion transport</keyword>
<keyword id="KW-0406">Ion transport</keyword>
<keyword id="KW-0472">Membrane</keyword>
<keyword id="KW-0547">Nucleotide-binding</keyword>
<keyword id="KW-1278">Translocase</keyword>
<keyword id="KW-0813">Transport</keyword>
<comment type="function">
    <text evidence="1">Produces ATP from ADP in the presence of a proton gradient across the membrane. The alpha chain is a regulatory subunit.</text>
</comment>
<comment type="catalytic activity">
    <reaction evidence="1">
        <text>ATP + H2O + 4 H(+)(in) = ADP + phosphate + 5 H(+)(out)</text>
        <dbReference type="Rhea" id="RHEA:57720"/>
        <dbReference type="ChEBI" id="CHEBI:15377"/>
        <dbReference type="ChEBI" id="CHEBI:15378"/>
        <dbReference type="ChEBI" id="CHEBI:30616"/>
        <dbReference type="ChEBI" id="CHEBI:43474"/>
        <dbReference type="ChEBI" id="CHEBI:456216"/>
        <dbReference type="EC" id="7.1.2.2"/>
    </reaction>
</comment>
<comment type="subunit">
    <text evidence="1">F-type ATPases have 2 components, CF(1) - the catalytic core - and CF(0) - the membrane proton channel. CF(1) has five subunits: alpha(3), beta(3), gamma(1), delta(1), epsilon(1). CF(0) has three main subunits: a(1), b(2) and c(9-12). The alpha and beta chains form an alternating ring which encloses part of the gamma chain. CF(1) is attached to CF(0) by a central stalk formed by the gamma and epsilon chains, while a peripheral stalk is formed by the delta and b chains.</text>
</comment>
<comment type="subcellular location">
    <subcellularLocation>
        <location evidence="1">Cell inner membrane</location>
        <topology evidence="1">Peripheral membrane protein</topology>
    </subcellularLocation>
</comment>
<comment type="similarity">
    <text evidence="1">Belongs to the ATPase alpha/beta chains family.</text>
</comment>
<feature type="chain" id="PRO_0000238356" description="ATP synthase subunit alpha">
    <location>
        <begin position="1"/>
        <end position="513"/>
    </location>
</feature>
<feature type="binding site" evidence="1">
    <location>
        <begin position="169"/>
        <end position="176"/>
    </location>
    <ligand>
        <name>ATP</name>
        <dbReference type="ChEBI" id="CHEBI:30616"/>
    </ligand>
</feature>
<feature type="site" description="Required for activity" evidence="1">
    <location>
        <position position="373"/>
    </location>
</feature>
<gene>
    <name evidence="1" type="primary">atpA</name>
    <name type="ordered locus">SG2412</name>
</gene>
<evidence type="ECO:0000255" key="1">
    <source>
        <dbReference type="HAMAP-Rule" id="MF_01346"/>
    </source>
</evidence>
<organism>
    <name type="scientific">Sodalis glossinidius (strain morsitans)</name>
    <dbReference type="NCBI Taxonomy" id="343509"/>
    <lineage>
        <taxon>Bacteria</taxon>
        <taxon>Pseudomonadati</taxon>
        <taxon>Pseudomonadota</taxon>
        <taxon>Gammaproteobacteria</taxon>
        <taxon>Enterobacterales</taxon>
        <taxon>Bruguierivoracaceae</taxon>
        <taxon>Sodalis</taxon>
    </lineage>
</organism>
<name>ATPA_SODGM</name>
<proteinExistence type="inferred from homology"/>
<dbReference type="EC" id="7.1.2.2" evidence="1"/>
<dbReference type="EMBL" id="AP008232">
    <property type="protein sequence ID" value="BAE75687.1"/>
    <property type="molecule type" value="Genomic_DNA"/>
</dbReference>
<dbReference type="RefSeq" id="WP_011412217.1">
    <property type="nucleotide sequence ID" value="NC_007712.1"/>
</dbReference>
<dbReference type="SMR" id="Q2NQ88"/>
<dbReference type="STRING" id="343509.SG2412"/>
<dbReference type="KEGG" id="sgl:SG2412"/>
<dbReference type="eggNOG" id="COG0056">
    <property type="taxonomic scope" value="Bacteria"/>
</dbReference>
<dbReference type="HOGENOM" id="CLU_010091_2_1_6"/>
<dbReference type="OrthoDB" id="9803053at2"/>
<dbReference type="BioCyc" id="SGLO343509:SGP1_RS21875-MONOMER"/>
<dbReference type="Proteomes" id="UP000001932">
    <property type="component" value="Chromosome"/>
</dbReference>
<dbReference type="GO" id="GO:0005886">
    <property type="term" value="C:plasma membrane"/>
    <property type="evidence" value="ECO:0007669"/>
    <property type="project" value="UniProtKB-SubCell"/>
</dbReference>
<dbReference type="GO" id="GO:0045259">
    <property type="term" value="C:proton-transporting ATP synthase complex"/>
    <property type="evidence" value="ECO:0007669"/>
    <property type="project" value="UniProtKB-KW"/>
</dbReference>
<dbReference type="GO" id="GO:0043531">
    <property type="term" value="F:ADP binding"/>
    <property type="evidence" value="ECO:0007669"/>
    <property type="project" value="TreeGrafter"/>
</dbReference>
<dbReference type="GO" id="GO:0005524">
    <property type="term" value="F:ATP binding"/>
    <property type="evidence" value="ECO:0007669"/>
    <property type="project" value="UniProtKB-UniRule"/>
</dbReference>
<dbReference type="GO" id="GO:0046933">
    <property type="term" value="F:proton-transporting ATP synthase activity, rotational mechanism"/>
    <property type="evidence" value="ECO:0007669"/>
    <property type="project" value="UniProtKB-UniRule"/>
</dbReference>
<dbReference type="CDD" id="cd18113">
    <property type="entry name" value="ATP-synt_F1_alpha_C"/>
    <property type="match status" value="1"/>
</dbReference>
<dbReference type="CDD" id="cd18116">
    <property type="entry name" value="ATP-synt_F1_alpha_N"/>
    <property type="match status" value="1"/>
</dbReference>
<dbReference type="CDD" id="cd01132">
    <property type="entry name" value="F1-ATPase_alpha_CD"/>
    <property type="match status" value="1"/>
</dbReference>
<dbReference type="FunFam" id="1.20.150.20:FF:000001">
    <property type="entry name" value="ATP synthase subunit alpha"/>
    <property type="match status" value="1"/>
</dbReference>
<dbReference type="FunFam" id="2.40.30.20:FF:000001">
    <property type="entry name" value="ATP synthase subunit alpha"/>
    <property type="match status" value="1"/>
</dbReference>
<dbReference type="FunFam" id="3.40.50.300:FF:000002">
    <property type="entry name" value="ATP synthase subunit alpha"/>
    <property type="match status" value="1"/>
</dbReference>
<dbReference type="Gene3D" id="2.40.30.20">
    <property type="match status" value="1"/>
</dbReference>
<dbReference type="Gene3D" id="1.20.150.20">
    <property type="entry name" value="ATP synthase alpha/beta chain, C-terminal domain"/>
    <property type="match status" value="1"/>
</dbReference>
<dbReference type="Gene3D" id="3.40.50.300">
    <property type="entry name" value="P-loop containing nucleotide triphosphate hydrolases"/>
    <property type="match status" value="1"/>
</dbReference>
<dbReference type="HAMAP" id="MF_01346">
    <property type="entry name" value="ATP_synth_alpha_bact"/>
    <property type="match status" value="1"/>
</dbReference>
<dbReference type="InterPro" id="IPR023366">
    <property type="entry name" value="ATP_synth_asu-like_sf"/>
</dbReference>
<dbReference type="InterPro" id="IPR000793">
    <property type="entry name" value="ATP_synth_asu_C"/>
</dbReference>
<dbReference type="InterPro" id="IPR038376">
    <property type="entry name" value="ATP_synth_asu_C_sf"/>
</dbReference>
<dbReference type="InterPro" id="IPR033732">
    <property type="entry name" value="ATP_synth_F1_a_nt-bd_dom"/>
</dbReference>
<dbReference type="InterPro" id="IPR005294">
    <property type="entry name" value="ATP_synth_F1_asu"/>
</dbReference>
<dbReference type="InterPro" id="IPR020003">
    <property type="entry name" value="ATPase_a/bsu_AS"/>
</dbReference>
<dbReference type="InterPro" id="IPR004100">
    <property type="entry name" value="ATPase_F1/V1/A1_a/bsu_N"/>
</dbReference>
<dbReference type="InterPro" id="IPR036121">
    <property type="entry name" value="ATPase_F1/V1/A1_a/bsu_N_sf"/>
</dbReference>
<dbReference type="InterPro" id="IPR000194">
    <property type="entry name" value="ATPase_F1/V1/A1_a/bsu_nucl-bd"/>
</dbReference>
<dbReference type="InterPro" id="IPR027417">
    <property type="entry name" value="P-loop_NTPase"/>
</dbReference>
<dbReference type="NCBIfam" id="TIGR00962">
    <property type="entry name" value="atpA"/>
    <property type="match status" value="1"/>
</dbReference>
<dbReference type="NCBIfam" id="NF009884">
    <property type="entry name" value="PRK13343.1"/>
    <property type="match status" value="1"/>
</dbReference>
<dbReference type="PANTHER" id="PTHR48082">
    <property type="entry name" value="ATP SYNTHASE SUBUNIT ALPHA, MITOCHONDRIAL"/>
    <property type="match status" value="1"/>
</dbReference>
<dbReference type="PANTHER" id="PTHR48082:SF2">
    <property type="entry name" value="ATP SYNTHASE SUBUNIT ALPHA, MITOCHONDRIAL"/>
    <property type="match status" value="1"/>
</dbReference>
<dbReference type="Pfam" id="PF00006">
    <property type="entry name" value="ATP-synt_ab"/>
    <property type="match status" value="1"/>
</dbReference>
<dbReference type="Pfam" id="PF00306">
    <property type="entry name" value="ATP-synt_ab_C"/>
    <property type="match status" value="1"/>
</dbReference>
<dbReference type="Pfam" id="PF02874">
    <property type="entry name" value="ATP-synt_ab_N"/>
    <property type="match status" value="1"/>
</dbReference>
<dbReference type="SUPFAM" id="SSF47917">
    <property type="entry name" value="C-terminal domain of alpha and beta subunits of F1 ATP synthase"/>
    <property type="match status" value="1"/>
</dbReference>
<dbReference type="SUPFAM" id="SSF50615">
    <property type="entry name" value="N-terminal domain of alpha and beta subunits of F1 ATP synthase"/>
    <property type="match status" value="1"/>
</dbReference>
<dbReference type="SUPFAM" id="SSF52540">
    <property type="entry name" value="P-loop containing nucleoside triphosphate hydrolases"/>
    <property type="match status" value="1"/>
</dbReference>
<dbReference type="PROSITE" id="PS00152">
    <property type="entry name" value="ATPASE_ALPHA_BETA"/>
    <property type="match status" value="1"/>
</dbReference>
<protein>
    <recommendedName>
        <fullName evidence="1">ATP synthase subunit alpha</fullName>
        <ecNumber evidence="1">7.1.2.2</ecNumber>
    </recommendedName>
    <alternativeName>
        <fullName evidence="1">ATP synthase F1 sector subunit alpha</fullName>
    </alternativeName>
    <alternativeName>
        <fullName evidence="1">F-ATPase subunit alpha</fullName>
    </alternativeName>
</protein>
<sequence>MQLNSTEISELIKQRIAQFNVVSEAHNEGTIVSVSDGIIRVHGLAEVMQGEMIALPGNRFAIALNLERDSVGAVVMGPYADLAEGMKVKCTGRILEVPVGRGLLGRVVNTLGAPIDGKVPLEHDGFSAVEAIAPGVIERQSVDEPVQTGYKSVDAMIPIGRGQRELIIGDRQTGKSALAIDAIINQRDSGIKCIYVAIGQKASTIANVVRKLEEHGALANTIVVVATASESAALQYLAPYAGCAMGEYFRDRGEDALIIYDDLSKQAVAYRQISLLLRRPPGREAYPGDVFYLHSRLLERASRVNAEYVENYTKGEVKGKTGSLTALPIIETQAGDVSAFVPTNVISITDGQIFLESNLFNAGIRPAVNPGISVSRVGGAAQTKIMKKLSGGIRTALAQYRELAAFSQFASDLDDATRKQLNHGQKVTELLKQKQYAPMSVAQQALVLFAAERGYLEDVELAKIGDFEAALMAYVDREQGELMQQINQTGAYNDYIEGKLKGILDTFKATQSW</sequence>
<reference key="1">
    <citation type="journal article" date="2006" name="Genome Res.">
        <title>Massive genome erosion and functional adaptations provide insights into the symbiotic lifestyle of Sodalis glossinidius in the tsetse host.</title>
        <authorList>
            <person name="Toh H."/>
            <person name="Weiss B.L."/>
            <person name="Perkin S.A.H."/>
            <person name="Yamashita A."/>
            <person name="Oshima K."/>
            <person name="Hattori M."/>
            <person name="Aksoy S."/>
        </authorList>
    </citation>
    <scope>NUCLEOTIDE SEQUENCE [LARGE SCALE GENOMIC DNA]</scope>
    <source>
        <strain>morsitans</strain>
    </source>
</reference>
<accession>Q2NQ88</accession>